<gene>
    <name evidence="1" type="primary">tatA</name>
    <name type="ordered locus">NGR_c13710</name>
</gene>
<name>TATA_SINFN</name>
<keyword id="KW-0997">Cell inner membrane</keyword>
<keyword id="KW-1003">Cell membrane</keyword>
<keyword id="KW-0472">Membrane</keyword>
<keyword id="KW-0653">Protein transport</keyword>
<keyword id="KW-1185">Reference proteome</keyword>
<keyword id="KW-0811">Translocation</keyword>
<keyword id="KW-0812">Transmembrane</keyword>
<keyword id="KW-1133">Transmembrane helix</keyword>
<keyword id="KW-0813">Transport</keyword>
<accession>C3MBT9</accession>
<comment type="function">
    <text evidence="1">Part of the twin-arginine translocation (Tat) system that transports large folded proteins containing a characteristic twin-arginine motif in their signal peptide across membranes. TatA could form the protein-conducting channel of the Tat system.</text>
</comment>
<comment type="subunit">
    <text evidence="1">The Tat system comprises two distinct complexes: a TatABC complex, containing multiple copies of TatA, TatB and TatC subunits, and a separate TatA complex, containing only TatA subunits. Substrates initially bind to the TatABC complex, which probably triggers association of the separate TatA complex to form the active translocon.</text>
</comment>
<comment type="subcellular location">
    <subcellularLocation>
        <location evidence="1">Cell inner membrane</location>
        <topology evidence="1">Single-pass membrane protein</topology>
    </subcellularLocation>
</comment>
<comment type="similarity">
    <text evidence="1">Belongs to the TatA/E family.</text>
</comment>
<protein>
    <recommendedName>
        <fullName evidence="1">Sec-independent protein translocase protein TatA</fullName>
    </recommendedName>
</protein>
<organism>
    <name type="scientific">Sinorhizobium fredii (strain NBRC 101917 / NGR234)</name>
    <dbReference type="NCBI Taxonomy" id="394"/>
    <lineage>
        <taxon>Bacteria</taxon>
        <taxon>Pseudomonadati</taxon>
        <taxon>Pseudomonadota</taxon>
        <taxon>Alphaproteobacteria</taxon>
        <taxon>Hyphomicrobiales</taxon>
        <taxon>Rhizobiaceae</taxon>
        <taxon>Sinorhizobium/Ensifer group</taxon>
        <taxon>Sinorhizobium</taxon>
    </lineage>
</organism>
<dbReference type="EMBL" id="CP001389">
    <property type="protein sequence ID" value="ACP25151.1"/>
    <property type="molecule type" value="Genomic_DNA"/>
</dbReference>
<dbReference type="RefSeq" id="WP_012707927.1">
    <property type="nucleotide sequence ID" value="NC_012587.1"/>
</dbReference>
<dbReference type="RefSeq" id="YP_002825904.1">
    <property type="nucleotide sequence ID" value="NC_012587.1"/>
</dbReference>
<dbReference type="SMR" id="C3MBT9"/>
<dbReference type="STRING" id="394.NGR_c13710"/>
<dbReference type="KEGG" id="rhi:NGR_c13710"/>
<dbReference type="PATRIC" id="fig|394.7.peg.4191"/>
<dbReference type="eggNOG" id="COG1826">
    <property type="taxonomic scope" value="Bacteria"/>
</dbReference>
<dbReference type="HOGENOM" id="CLU_086034_5_0_5"/>
<dbReference type="OrthoDB" id="7161179at2"/>
<dbReference type="Proteomes" id="UP000001054">
    <property type="component" value="Chromosome"/>
</dbReference>
<dbReference type="GO" id="GO:0033281">
    <property type="term" value="C:TAT protein transport complex"/>
    <property type="evidence" value="ECO:0007669"/>
    <property type="project" value="UniProtKB-UniRule"/>
</dbReference>
<dbReference type="GO" id="GO:0008320">
    <property type="term" value="F:protein transmembrane transporter activity"/>
    <property type="evidence" value="ECO:0007669"/>
    <property type="project" value="UniProtKB-UniRule"/>
</dbReference>
<dbReference type="GO" id="GO:0043953">
    <property type="term" value="P:protein transport by the Tat complex"/>
    <property type="evidence" value="ECO:0007669"/>
    <property type="project" value="UniProtKB-UniRule"/>
</dbReference>
<dbReference type="Gene3D" id="1.20.5.3310">
    <property type="match status" value="1"/>
</dbReference>
<dbReference type="HAMAP" id="MF_00236">
    <property type="entry name" value="TatA_E"/>
    <property type="match status" value="1"/>
</dbReference>
<dbReference type="InterPro" id="IPR003369">
    <property type="entry name" value="TatA/B/E"/>
</dbReference>
<dbReference type="InterPro" id="IPR006312">
    <property type="entry name" value="TatA/E"/>
</dbReference>
<dbReference type="NCBIfam" id="NF001940">
    <property type="entry name" value="PRK00720.1"/>
    <property type="match status" value="1"/>
</dbReference>
<dbReference type="NCBIfam" id="TIGR01411">
    <property type="entry name" value="tatAE"/>
    <property type="match status" value="1"/>
</dbReference>
<dbReference type="PANTHER" id="PTHR42982">
    <property type="entry name" value="SEC-INDEPENDENT PROTEIN TRANSLOCASE PROTEIN TATA"/>
    <property type="match status" value="1"/>
</dbReference>
<dbReference type="PANTHER" id="PTHR42982:SF1">
    <property type="entry name" value="SEC-INDEPENDENT PROTEIN TRANSLOCASE PROTEIN TATA"/>
    <property type="match status" value="1"/>
</dbReference>
<dbReference type="Pfam" id="PF02416">
    <property type="entry name" value="TatA_B_E"/>
    <property type="match status" value="1"/>
</dbReference>
<sequence>MGSFSIWHWLIVLVVVLLLFGRGKIPELMGDVAKGIKNFKKGMTDEEAASADKTIDGKTVEHKSDEVR</sequence>
<feature type="chain" id="PRO_1000197901" description="Sec-independent protein translocase protein TatA">
    <location>
        <begin position="1"/>
        <end position="68"/>
    </location>
</feature>
<feature type="transmembrane region" description="Helical" evidence="1">
    <location>
        <begin position="1"/>
        <end position="21"/>
    </location>
</feature>
<feature type="region of interest" description="Disordered" evidence="2">
    <location>
        <begin position="46"/>
        <end position="68"/>
    </location>
</feature>
<feature type="compositionally biased region" description="Basic and acidic residues" evidence="2">
    <location>
        <begin position="53"/>
        <end position="68"/>
    </location>
</feature>
<proteinExistence type="inferred from homology"/>
<reference key="1">
    <citation type="journal article" date="2009" name="Appl. Environ. Microbiol.">
        <title>Rhizobium sp. strain NGR234 possesses a remarkable number of secretion systems.</title>
        <authorList>
            <person name="Schmeisser C."/>
            <person name="Liesegang H."/>
            <person name="Krysciak D."/>
            <person name="Bakkou N."/>
            <person name="Le Quere A."/>
            <person name="Wollherr A."/>
            <person name="Heinemeyer I."/>
            <person name="Morgenstern B."/>
            <person name="Pommerening-Roeser A."/>
            <person name="Flores M."/>
            <person name="Palacios R."/>
            <person name="Brenner S."/>
            <person name="Gottschalk G."/>
            <person name="Schmitz R.A."/>
            <person name="Broughton W.J."/>
            <person name="Perret X."/>
            <person name="Strittmatter A.W."/>
            <person name="Streit W.R."/>
        </authorList>
    </citation>
    <scope>NUCLEOTIDE SEQUENCE [LARGE SCALE GENOMIC DNA]</scope>
    <source>
        <strain>NBRC 101917 / NGR234</strain>
    </source>
</reference>
<evidence type="ECO:0000255" key="1">
    <source>
        <dbReference type="HAMAP-Rule" id="MF_00236"/>
    </source>
</evidence>
<evidence type="ECO:0000256" key="2">
    <source>
        <dbReference type="SAM" id="MobiDB-lite"/>
    </source>
</evidence>